<name>RPOA_MYCSJ</name>
<accession>A3PVL8</accession>
<protein>
    <recommendedName>
        <fullName evidence="1">DNA-directed RNA polymerase subunit alpha</fullName>
        <shortName evidence="1">RNAP subunit alpha</shortName>
        <ecNumber evidence="1">2.7.7.6</ecNumber>
    </recommendedName>
    <alternativeName>
        <fullName evidence="1">RNA polymerase subunit alpha</fullName>
    </alternativeName>
    <alternativeName>
        <fullName evidence="1">Transcriptase subunit alpha</fullName>
    </alternativeName>
</protein>
<organism>
    <name type="scientific">Mycobacterium sp. (strain JLS)</name>
    <dbReference type="NCBI Taxonomy" id="164757"/>
    <lineage>
        <taxon>Bacteria</taxon>
        <taxon>Bacillati</taxon>
        <taxon>Actinomycetota</taxon>
        <taxon>Actinomycetes</taxon>
        <taxon>Mycobacteriales</taxon>
        <taxon>Mycobacteriaceae</taxon>
        <taxon>Mycobacterium</taxon>
    </lineage>
</organism>
<sequence length="350" mass="38066">MLISQRPTLSEETVADNRSRFVIEPLEPGFGYTLGNSLRRTLLSSIPGAAVTSIRIDGVLHEFTTVPGVKEDVTDIILNLKSLVVSSEEDEPVTMYLRKQGPGEVTAGDIVPPAGVTVHNPEMHIATLNDKGKLEVELVVERGRGYVPAVQNKASGAEIGRIPVDSIYSPVLKVTYKVEATRVEQRTDFDKLILDVETKNSITPRDALASAGKTLVELFGLARELNVEAEGIEIGPSPAEADHIASFALPIDDLDLTVRSYNCLKREGVHTVGELVARTESDLLDIRNFGQKSIDEVKIKLHQLGLSLKDSPATFDPSEVAGYDAATGTWNSDAGYDLEDNQDYAETEQL</sequence>
<keyword id="KW-0240">DNA-directed RNA polymerase</keyword>
<keyword id="KW-0548">Nucleotidyltransferase</keyword>
<keyword id="KW-0804">Transcription</keyword>
<keyword id="KW-0808">Transferase</keyword>
<evidence type="ECO:0000255" key="1">
    <source>
        <dbReference type="HAMAP-Rule" id="MF_00059"/>
    </source>
</evidence>
<evidence type="ECO:0000256" key="2">
    <source>
        <dbReference type="SAM" id="MobiDB-lite"/>
    </source>
</evidence>
<proteinExistence type="inferred from homology"/>
<comment type="function">
    <text evidence="1">DNA-dependent RNA polymerase catalyzes the transcription of DNA into RNA using the four ribonucleoside triphosphates as substrates.</text>
</comment>
<comment type="catalytic activity">
    <reaction evidence="1">
        <text>RNA(n) + a ribonucleoside 5'-triphosphate = RNA(n+1) + diphosphate</text>
        <dbReference type="Rhea" id="RHEA:21248"/>
        <dbReference type="Rhea" id="RHEA-COMP:14527"/>
        <dbReference type="Rhea" id="RHEA-COMP:17342"/>
        <dbReference type="ChEBI" id="CHEBI:33019"/>
        <dbReference type="ChEBI" id="CHEBI:61557"/>
        <dbReference type="ChEBI" id="CHEBI:140395"/>
        <dbReference type="EC" id="2.7.7.6"/>
    </reaction>
</comment>
<comment type="subunit">
    <text evidence="1">Homodimer. The RNAP catalytic core consists of 2 alpha, 1 beta, 1 beta' and 1 omega subunit. When a sigma factor is associated with the core the holoenzyme is formed, which can initiate transcription.</text>
</comment>
<comment type="domain">
    <text evidence="1">The N-terminal domain is essential for RNAP assembly and basal transcription, whereas the C-terminal domain is involved in interaction with transcriptional regulators and with upstream promoter elements.</text>
</comment>
<comment type="similarity">
    <text evidence="1">Belongs to the RNA polymerase alpha chain family.</text>
</comment>
<feature type="chain" id="PRO_0000296836" description="DNA-directed RNA polymerase subunit alpha">
    <location>
        <begin position="1"/>
        <end position="350"/>
    </location>
</feature>
<feature type="region of interest" description="Alpha N-terminal domain (alpha-NTD)" evidence="1">
    <location>
        <begin position="1"/>
        <end position="226"/>
    </location>
</feature>
<feature type="region of interest" description="Alpha C-terminal domain (alpha-CTD)" evidence="1">
    <location>
        <begin position="241"/>
        <end position="350"/>
    </location>
</feature>
<feature type="region of interest" description="Disordered" evidence="2">
    <location>
        <begin position="326"/>
        <end position="350"/>
    </location>
</feature>
<feature type="compositionally biased region" description="Acidic residues" evidence="2">
    <location>
        <begin position="336"/>
        <end position="350"/>
    </location>
</feature>
<dbReference type="EC" id="2.7.7.6" evidence="1"/>
<dbReference type="EMBL" id="CP000580">
    <property type="protein sequence ID" value="ABN96945.1"/>
    <property type="molecule type" value="Genomic_DNA"/>
</dbReference>
<dbReference type="SMR" id="A3PVL8"/>
<dbReference type="KEGG" id="mjl:Mjls_1142"/>
<dbReference type="HOGENOM" id="CLU_053084_0_1_11"/>
<dbReference type="BioCyc" id="MSP164757:G1G8C-1154-MONOMER"/>
<dbReference type="GO" id="GO:0005737">
    <property type="term" value="C:cytoplasm"/>
    <property type="evidence" value="ECO:0007669"/>
    <property type="project" value="UniProtKB-ARBA"/>
</dbReference>
<dbReference type="GO" id="GO:0000428">
    <property type="term" value="C:DNA-directed RNA polymerase complex"/>
    <property type="evidence" value="ECO:0007669"/>
    <property type="project" value="UniProtKB-KW"/>
</dbReference>
<dbReference type="GO" id="GO:0003677">
    <property type="term" value="F:DNA binding"/>
    <property type="evidence" value="ECO:0007669"/>
    <property type="project" value="UniProtKB-UniRule"/>
</dbReference>
<dbReference type="GO" id="GO:0003899">
    <property type="term" value="F:DNA-directed RNA polymerase activity"/>
    <property type="evidence" value="ECO:0007669"/>
    <property type="project" value="UniProtKB-UniRule"/>
</dbReference>
<dbReference type="GO" id="GO:0046983">
    <property type="term" value="F:protein dimerization activity"/>
    <property type="evidence" value="ECO:0007669"/>
    <property type="project" value="InterPro"/>
</dbReference>
<dbReference type="GO" id="GO:0006351">
    <property type="term" value="P:DNA-templated transcription"/>
    <property type="evidence" value="ECO:0007669"/>
    <property type="project" value="UniProtKB-UniRule"/>
</dbReference>
<dbReference type="CDD" id="cd06928">
    <property type="entry name" value="RNAP_alpha_NTD"/>
    <property type="match status" value="1"/>
</dbReference>
<dbReference type="FunFam" id="1.10.150.20:FF:000001">
    <property type="entry name" value="DNA-directed RNA polymerase subunit alpha"/>
    <property type="match status" value="1"/>
</dbReference>
<dbReference type="FunFam" id="2.170.120.12:FF:000001">
    <property type="entry name" value="DNA-directed RNA polymerase subunit alpha"/>
    <property type="match status" value="1"/>
</dbReference>
<dbReference type="Gene3D" id="1.10.150.20">
    <property type="entry name" value="5' to 3' exonuclease, C-terminal subdomain"/>
    <property type="match status" value="1"/>
</dbReference>
<dbReference type="Gene3D" id="2.170.120.12">
    <property type="entry name" value="DNA-directed RNA polymerase, insert domain"/>
    <property type="match status" value="1"/>
</dbReference>
<dbReference type="Gene3D" id="3.30.1360.10">
    <property type="entry name" value="RNA polymerase, RBP11-like subunit"/>
    <property type="match status" value="1"/>
</dbReference>
<dbReference type="HAMAP" id="MF_00059">
    <property type="entry name" value="RNApol_bact_RpoA"/>
    <property type="match status" value="1"/>
</dbReference>
<dbReference type="InterPro" id="IPR011262">
    <property type="entry name" value="DNA-dir_RNA_pol_insert"/>
</dbReference>
<dbReference type="InterPro" id="IPR011263">
    <property type="entry name" value="DNA-dir_RNA_pol_RpoA/D/Rpb3"/>
</dbReference>
<dbReference type="InterPro" id="IPR011773">
    <property type="entry name" value="DNA-dir_RpoA"/>
</dbReference>
<dbReference type="InterPro" id="IPR036603">
    <property type="entry name" value="RBP11-like"/>
</dbReference>
<dbReference type="InterPro" id="IPR011260">
    <property type="entry name" value="RNAP_asu_C"/>
</dbReference>
<dbReference type="InterPro" id="IPR036643">
    <property type="entry name" value="RNApol_insert_sf"/>
</dbReference>
<dbReference type="NCBIfam" id="NF003513">
    <property type="entry name" value="PRK05182.1-2"/>
    <property type="match status" value="1"/>
</dbReference>
<dbReference type="NCBIfam" id="NF003514">
    <property type="entry name" value="PRK05182.1-4"/>
    <property type="match status" value="1"/>
</dbReference>
<dbReference type="NCBIfam" id="NF003519">
    <property type="entry name" value="PRK05182.2-5"/>
    <property type="match status" value="1"/>
</dbReference>
<dbReference type="NCBIfam" id="TIGR02027">
    <property type="entry name" value="rpoA"/>
    <property type="match status" value="1"/>
</dbReference>
<dbReference type="Pfam" id="PF01000">
    <property type="entry name" value="RNA_pol_A_bac"/>
    <property type="match status" value="1"/>
</dbReference>
<dbReference type="Pfam" id="PF03118">
    <property type="entry name" value="RNA_pol_A_CTD"/>
    <property type="match status" value="1"/>
</dbReference>
<dbReference type="Pfam" id="PF01193">
    <property type="entry name" value="RNA_pol_L"/>
    <property type="match status" value="1"/>
</dbReference>
<dbReference type="SMART" id="SM00662">
    <property type="entry name" value="RPOLD"/>
    <property type="match status" value="1"/>
</dbReference>
<dbReference type="SUPFAM" id="SSF47789">
    <property type="entry name" value="C-terminal domain of RNA polymerase alpha subunit"/>
    <property type="match status" value="1"/>
</dbReference>
<dbReference type="SUPFAM" id="SSF56553">
    <property type="entry name" value="Insert subdomain of RNA polymerase alpha subunit"/>
    <property type="match status" value="1"/>
</dbReference>
<dbReference type="SUPFAM" id="SSF55257">
    <property type="entry name" value="RBP11-like subunits of RNA polymerase"/>
    <property type="match status" value="1"/>
</dbReference>
<reference key="1">
    <citation type="submission" date="2007-02" db="EMBL/GenBank/DDBJ databases">
        <title>Complete sequence of Mycobacterium sp. JLS.</title>
        <authorList>
            <consortium name="US DOE Joint Genome Institute"/>
            <person name="Copeland A."/>
            <person name="Lucas S."/>
            <person name="Lapidus A."/>
            <person name="Barry K."/>
            <person name="Detter J.C."/>
            <person name="Glavina del Rio T."/>
            <person name="Hammon N."/>
            <person name="Israni S."/>
            <person name="Dalin E."/>
            <person name="Tice H."/>
            <person name="Pitluck S."/>
            <person name="Chain P."/>
            <person name="Malfatti S."/>
            <person name="Shin M."/>
            <person name="Vergez L."/>
            <person name="Schmutz J."/>
            <person name="Larimer F."/>
            <person name="Land M."/>
            <person name="Hauser L."/>
            <person name="Kyrpides N."/>
            <person name="Mikhailova N."/>
            <person name="Miller C.D."/>
            <person name="Anderson A.J."/>
            <person name="Sims R.C."/>
            <person name="Richardson P."/>
        </authorList>
    </citation>
    <scope>NUCLEOTIDE SEQUENCE [LARGE SCALE GENOMIC DNA]</scope>
    <source>
        <strain>JLS</strain>
    </source>
</reference>
<gene>
    <name evidence="1" type="primary">rpoA</name>
    <name type="ordered locus">Mjls_1142</name>
</gene>